<keyword id="KW-0997">Cell inner membrane</keyword>
<keyword id="KW-1003">Cell membrane</keyword>
<keyword id="KW-0133">Cell shape</keyword>
<keyword id="KW-0961">Cell wall biogenesis/degradation</keyword>
<keyword id="KW-0328">Glycosyltransferase</keyword>
<keyword id="KW-0472">Membrane</keyword>
<keyword id="KW-0573">Peptidoglycan synthesis</keyword>
<keyword id="KW-0808">Transferase</keyword>
<keyword id="KW-0812">Transmembrane</keyword>
<keyword id="KW-1133">Transmembrane helix</keyword>
<feature type="chain" id="PRO_1000133608" description="Biosynthetic peptidoglycan transglycosylase">
    <location>
        <begin position="1"/>
        <end position="242"/>
    </location>
</feature>
<feature type="transmembrane region" description="Helical" evidence="1">
    <location>
        <begin position="19"/>
        <end position="39"/>
    </location>
</feature>
<comment type="function">
    <text evidence="1">Peptidoglycan polymerase that catalyzes glycan chain elongation from lipid-linked precursors.</text>
</comment>
<comment type="catalytic activity">
    <reaction evidence="1">
        <text>[GlcNAc-(1-&gt;4)-Mur2Ac(oyl-L-Ala-gamma-D-Glu-L-Lys-D-Ala-D-Ala)](n)-di-trans,octa-cis-undecaprenyl diphosphate + beta-D-GlcNAc-(1-&gt;4)-Mur2Ac(oyl-L-Ala-gamma-D-Glu-L-Lys-D-Ala-D-Ala)-di-trans,octa-cis-undecaprenyl diphosphate = [GlcNAc-(1-&gt;4)-Mur2Ac(oyl-L-Ala-gamma-D-Glu-L-Lys-D-Ala-D-Ala)](n+1)-di-trans,octa-cis-undecaprenyl diphosphate + di-trans,octa-cis-undecaprenyl diphosphate + H(+)</text>
        <dbReference type="Rhea" id="RHEA:23708"/>
        <dbReference type="Rhea" id="RHEA-COMP:9602"/>
        <dbReference type="Rhea" id="RHEA-COMP:9603"/>
        <dbReference type="ChEBI" id="CHEBI:15378"/>
        <dbReference type="ChEBI" id="CHEBI:58405"/>
        <dbReference type="ChEBI" id="CHEBI:60033"/>
        <dbReference type="ChEBI" id="CHEBI:78435"/>
        <dbReference type="EC" id="2.4.99.28"/>
    </reaction>
</comment>
<comment type="pathway">
    <text evidence="1">Cell wall biogenesis; peptidoglycan biosynthesis.</text>
</comment>
<comment type="subcellular location">
    <subcellularLocation>
        <location evidence="1">Cell inner membrane</location>
        <topology evidence="1">Single-pass membrane protein</topology>
    </subcellularLocation>
</comment>
<comment type="similarity">
    <text evidence="1">Belongs to the glycosyltransferase 51 family.</text>
</comment>
<organism>
    <name type="scientific">Salmonella heidelberg (strain SL476)</name>
    <dbReference type="NCBI Taxonomy" id="454169"/>
    <lineage>
        <taxon>Bacteria</taxon>
        <taxon>Pseudomonadati</taxon>
        <taxon>Pseudomonadota</taxon>
        <taxon>Gammaproteobacteria</taxon>
        <taxon>Enterobacterales</taxon>
        <taxon>Enterobacteriaceae</taxon>
        <taxon>Salmonella</taxon>
    </lineage>
</organism>
<dbReference type="EC" id="2.4.99.28" evidence="1"/>
<dbReference type="EMBL" id="CP001120">
    <property type="protein sequence ID" value="ACF68514.1"/>
    <property type="molecule type" value="Genomic_DNA"/>
</dbReference>
<dbReference type="RefSeq" id="WP_000044647.1">
    <property type="nucleotide sequence ID" value="NC_011083.1"/>
</dbReference>
<dbReference type="SMR" id="B4TJQ1"/>
<dbReference type="CAZy" id="GT51">
    <property type="family name" value="Glycosyltransferase Family 51"/>
</dbReference>
<dbReference type="KEGG" id="seh:SeHA_C3623"/>
<dbReference type="HOGENOM" id="CLU_006354_1_1_6"/>
<dbReference type="UniPathway" id="UPA00219"/>
<dbReference type="Proteomes" id="UP000001866">
    <property type="component" value="Chromosome"/>
</dbReference>
<dbReference type="GO" id="GO:0009274">
    <property type="term" value="C:peptidoglycan-based cell wall"/>
    <property type="evidence" value="ECO:0007669"/>
    <property type="project" value="InterPro"/>
</dbReference>
<dbReference type="GO" id="GO:0005886">
    <property type="term" value="C:plasma membrane"/>
    <property type="evidence" value="ECO:0007669"/>
    <property type="project" value="UniProtKB-SubCell"/>
</dbReference>
<dbReference type="GO" id="GO:0016763">
    <property type="term" value="F:pentosyltransferase activity"/>
    <property type="evidence" value="ECO:0007669"/>
    <property type="project" value="InterPro"/>
</dbReference>
<dbReference type="GO" id="GO:0008955">
    <property type="term" value="F:peptidoglycan glycosyltransferase activity"/>
    <property type="evidence" value="ECO:0007669"/>
    <property type="project" value="UniProtKB-UniRule"/>
</dbReference>
<dbReference type="GO" id="GO:0071555">
    <property type="term" value="P:cell wall organization"/>
    <property type="evidence" value="ECO:0007669"/>
    <property type="project" value="UniProtKB-KW"/>
</dbReference>
<dbReference type="GO" id="GO:0009252">
    <property type="term" value="P:peptidoglycan biosynthetic process"/>
    <property type="evidence" value="ECO:0007669"/>
    <property type="project" value="UniProtKB-UniRule"/>
</dbReference>
<dbReference type="GO" id="GO:0008360">
    <property type="term" value="P:regulation of cell shape"/>
    <property type="evidence" value="ECO:0007669"/>
    <property type="project" value="UniProtKB-KW"/>
</dbReference>
<dbReference type="Gene3D" id="1.10.3810.10">
    <property type="entry name" value="Biosynthetic peptidoglycan transglycosylase-like"/>
    <property type="match status" value="1"/>
</dbReference>
<dbReference type="HAMAP" id="MF_00766">
    <property type="entry name" value="PGT_MtgA"/>
    <property type="match status" value="1"/>
</dbReference>
<dbReference type="InterPro" id="IPR001264">
    <property type="entry name" value="Glyco_trans_51"/>
</dbReference>
<dbReference type="InterPro" id="IPR023346">
    <property type="entry name" value="Lysozyme-like_dom_sf"/>
</dbReference>
<dbReference type="InterPro" id="IPR036950">
    <property type="entry name" value="PBP_transglycosylase"/>
</dbReference>
<dbReference type="InterPro" id="IPR011812">
    <property type="entry name" value="Pep_trsgly"/>
</dbReference>
<dbReference type="NCBIfam" id="TIGR02070">
    <property type="entry name" value="mono_pep_trsgly"/>
    <property type="match status" value="1"/>
</dbReference>
<dbReference type="PANTHER" id="PTHR30400:SF0">
    <property type="entry name" value="BIOSYNTHETIC PEPTIDOGLYCAN TRANSGLYCOSYLASE"/>
    <property type="match status" value="1"/>
</dbReference>
<dbReference type="PANTHER" id="PTHR30400">
    <property type="entry name" value="MONOFUNCTIONAL BIOSYNTHETIC PEPTIDOGLYCAN TRANSGLYCOSYLASE"/>
    <property type="match status" value="1"/>
</dbReference>
<dbReference type="Pfam" id="PF00912">
    <property type="entry name" value="Transgly"/>
    <property type="match status" value="1"/>
</dbReference>
<dbReference type="SUPFAM" id="SSF53955">
    <property type="entry name" value="Lysozyme-like"/>
    <property type="match status" value="1"/>
</dbReference>
<reference key="1">
    <citation type="journal article" date="2011" name="J. Bacteriol.">
        <title>Comparative genomics of 28 Salmonella enterica isolates: evidence for CRISPR-mediated adaptive sublineage evolution.</title>
        <authorList>
            <person name="Fricke W.F."/>
            <person name="Mammel M.K."/>
            <person name="McDermott P.F."/>
            <person name="Tartera C."/>
            <person name="White D.G."/>
            <person name="Leclerc J.E."/>
            <person name="Ravel J."/>
            <person name="Cebula T.A."/>
        </authorList>
    </citation>
    <scope>NUCLEOTIDE SEQUENCE [LARGE SCALE GENOMIC DNA]</scope>
    <source>
        <strain>SL476</strain>
    </source>
</reference>
<gene>
    <name evidence="1" type="primary">mtgA</name>
    <name type="ordered locus">SeHA_C3623</name>
</gene>
<accession>B4TJQ1</accession>
<proteinExistence type="inferred from homology"/>
<protein>
    <recommendedName>
        <fullName evidence="1">Biosynthetic peptidoglycan transglycosylase</fullName>
        <ecNumber evidence="1">2.4.99.28</ecNumber>
    </recommendedName>
    <alternativeName>
        <fullName evidence="1">Glycan polymerase</fullName>
    </alternativeName>
    <alternativeName>
        <fullName evidence="1">Peptidoglycan glycosyltransferase MtgA</fullName>
        <shortName evidence="1">PGT</shortName>
    </alternativeName>
</protein>
<evidence type="ECO:0000255" key="1">
    <source>
        <dbReference type="HAMAP-Rule" id="MF_00766"/>
    </source>
</evidence>
<name>MTGA_SALHS</name>
<sequence length="242" mass="27002">MSKRRIAPLTFLRRLLLRILAALAVFWGGGIALFSVVPVPFSAVMAERQISAWLGGEFGYVAHSDWVSMADISPWMGLAVIAAEDQKFPEHWGFDVPAIEKALAHNERNESRIRGASTLSQQTAKNLFLWDGRSWLRKGLEAGLTLGIETVWSKKRILTVYLNIAEFGDGIFGVEAAAQRYFHKPASRLSVSEAALLAAVLPNPIRYKANAPSGYVRSRQAWIMRQMRQLGGESFMTRNQLN</sequence>